<accession>Q9KYG7</accession>
<name>CHPF_STRCO</name>
<comment type="function">
    <text evidence="2 3 4 5 6 7 8 10">One of 8 partially redundant surface-active proteins required for efficient formation of aerial mycelium; the short chaplins assemble into a hydrophobic, amyloidal fibrillar surface layer that envelopes and protects aerial hyphae and spores, presumably anchored to the long chaplins (PubMed:12832396, PubMed:12832397, PubMed:15228525, PubMed:17462011). Chaplins have an overlapping function with the surface-active SapB peptide; chaplins are essential on minimal medium while on rich medium both chaplins and SapB are required for efficient aerial hyphae formation (PubMed:17462011). Chaplins are also involved in cell attachment to a hydrophobic surface (PubMed:19682261). Forms amyloid fibrils in vitro probably composed of stacked beta-sheets, at low extracellular concentrations individually restores the ability to form aerial hyphae to a chaplin-deficient strain (PubMed:21526199). A small chaplin extract (ChpD, ChpE, ChpF, ChpG and ChpH) self-assembles into 2 different amyloids; small fibrils at the air-water interface form an amphipathic membrane that resembles spore-surface structures involved in aerial hyphae formation, and hydrophilic fibrils in solution that resemble the fibers that attach cells to a hydrophobic surface. At the air-water interface the hydrophilic surface is in contact with water (probably equivalent to the peptidoglycan layer), while the hydrophobic face is exposed to the air, making the surface of the aerial hyphae hydrophobic (PubMed:24012833). A small chaplin extract applied to a chaplin-deficient strain restores aerial hyphae formation (PubMed:12832396, PubMed:12832397). The small chaplin extract forms an amyloid-like structure similar to that seen on the surface of cells without rodlets (rdlA-rdlB deletions), and is highly surface active, reducing surface tension from 72 to 26 mJ/m(2), which probably allows escape of hyphae from an aqueous environment into air (PubMed:12832396). ChpF alone is less surface active at pH 3.0 than at pH 10.0, it reduces the surface tension of water from 72.8 mN/m to 50 mN/m at pH 3.0 or to 37 mN/m at pH 10.0 (PubMed:28925983). ChpF and ChpG are sufficient to restore the rodlet layer and hydrophobicity to a strain deleted for the other 6 chaplin genes (PubMed:15228525).</text>
</comment>
<comment type="subunit">
    <text evidence="7">Homodimer; disulfide linked. About 20% of ChpF isolated from cell wall forms disulfide-bonded homodimers.</text>
</comment>
<comment type="subcellular location">
    <subcellularLocation>
        <location evidence="2 3 14">Cell surface</location>
    </subcellularLocation>
    <subcellularLocation>
        <location evidence="2 3 7">Secreted</location>
        <location evidence="2 3 7">Cell wall</location>
    </subcellularLocation>
    <subcellularLocation>
        <location evidence="6">Fimbrium</location>
    </subcellularLocation>
    <text evidence="6">Considerably more ChpF is seen in fimbrae than in aerial hyphae.</text>
</comment>
<comment type="developmental stage">
    <text evidence="2 14">Present in aerial hyphae of sporulating cultures (at protein level).</text>
</comment>
<comment type="induction">
    <text evidence="2 3 5">Not expressed while still submerged, accumulates during aerial hyphae formation on minimal medium, no transcript detected during sporulation (PubMed:12832396). During aerial hyphae formation and early sporulation on rich medium, under control of ECF sigma factor BldN (PubMed:12832397). Expression depends on bldB but not bldA, bldD or bldH (at protein level) (PubMed:17462011).</text>
</comment>
<comment type="domain">
    <text evidence="10 15">The mature protein rapidly forms a predominantly amyloid fibril beta-sheet structure at pH 3.0 and 4.2, with less beta-sheet and more random coil at pH 10 (Probable) (PubMed:28925983). Reduced and non-reduced peptide have the same secondary structures at all pH tested, suggesting the disulfide bond is not required for fibril formation (PubMed:28925983).</text>
</comment>
<comment type="mass spectrometry"/>
<comment type="mass spectrometry"/>
<comment type="disruption phenotype">
    <text evidence="4 5 6">A strain deleted of chpF and chpG makes rodlets (PubMed:15228525). Deletion of all 8 chaplin genes on minimal medium leads to severely disrupted aerial hyphae that collapse on the colony surface and are not hydrophobic. A few spore chains can still be made, but they have neither rodlets or amyloid-like fibers. rdlA and rdlB mRNA are down-regulated (PubMed:15228525, PubMed:17462011). Deletion of all 8 chaplin genes on rich medium leads to a reduced abundance of aerial hyphae without rodlets and occasional spore chains on surface hyphae. A complete chaplin-negative plus ram-negative strain (deletion of ramR or the ramC-ramS-ramA-ramB operon) leads to the complete loss of robust aerial hyphae (PubMed:17462011). Deletion of all 8 chaplin genes significantly reduces cellular attachment to a hydrophobic substrate; thin fibrils instead of fimbrae are detected. The long chaplins (ChpA, ChpB and ChpC, as seen by near wild-type attachment of the hextuple chpA-chpB-chpC-chpD-chpE-chpH knockout) are not essential but may contribute to attachment (PubMed:19682261).</text>
</comment>
<comment type="biotechnology">
    <text evidence="9">The small chaplin mixture (a cell wall extract of an rdlA-rdlB knockout) forms a stable coat on a number of surfaces (including Teflon and cotton) and emulsifies oil-water mixtures, which could be useful in medical and technical applications.</text>
</comment>
<comment type="similarity">
    <text evidence="13">Belongs to the chaplin family. Short chaplin subfamily.</text>
</comment>
<evidence type="ECO:0000255" key="1">
    <source>
        <dbReference type="PROSITE-ProRule" id="PRU01232"/>
    </source>
</evidence>
<evidence type="ECO:0000269" key="2">
    <source>
    </source>
</evidence>
<evidence type="ECO:0000269" key="3">
    <source>
    </source>
</evidence>
<evidence type="ECO:0000269" key="4">
    <source>
    </source>
</evidence>
<evidence type="ECO:0000269" key="5">
    <source>
    </source>
</evidence>
<evidence type="ECO:0000269" key="6">
    <source>
    </source>
</evidence>
<evidence type="ECO:0000269" key="7">
    <source>
    </source>
</evidence>
<evidence type="ECO:0000269" key="8">
    <source>
    </source>
</evidence>
<evidence type="ECO:0000269" key="9">
    <source>
    </source>
</evidence>
<evidence type="ECO:0000269" key="10">
    <source>
    </source>
</evidence>
<evidence type="ECO:0000303" key="11">
    <source>
    </source>
</evidence>
<evidence type="ECO:0000303" key="12">
    <source>
    </source>
</evidence>
<evidence type="ECO:0000305" key="13">
    <source>
    </source>
</evidence>
<evidence type="ECO:0000305" key="14">
    <source>
    </source>
</evidence>
<evidence type="ECO:0000305" key="15">
    <source>
    </source>
</evidence>
<dbReference type="EMBL" id="AL939113">
    <property type="protein sequence ID" value="CAB92271.1"/>
    <property type="molecule type" value="Genomic_DNA"/>
</dbReference>
<dbReference type="RefSeq" id="NP_626939.1">
    <property type="nucleotide sequence ID" value="NC_003888.3"/>
</dbReference>
<dbReference type="STRING" id="100226.gene:17760312"/>
<dbReference type="PaxDb" id="100226-SCO2705"/>
<dbReference type="DNASU" id="1098139"/>
<dbReference type="KEGG" id="sco:SCO2705"/>
<dbReference type="PATRIC" id="fig|100226.15.peg.2760"/>
<dbReference type="eggNOG" id="ENOG50348JU">
    <property type="taxonomic scope" value="Bacteria"/>
</dbReference>
<dbReference type="HOGENOM" id="CLU_145456_3_1_11"/>
<dbReference type="InParanoid" id="Q9KYG7"/>
<dbReference type="Proteomes" id="UP000001973">
    <property type="component" value="Chromosome"/>
</dbReference>
<dbReference type="GO" id="GO:0009986">
    <property type="term" value="C:cell surface"/>
    <property type="evidence" value="ECO:0007669"/>
    <property type="project" value="UniProtKB-SubCell"/>
</dbReference>
<dbReference type="GO" id="GO:0005576">
    <property type="term" value="C:extracellular region"/>
    <property type="evidence" value="ECO:0007669"/>
    <property type="project" value="UniProtKB-KW"/>
</dbReference>
<dbReference type="GO" id="GO:0009289">
    <property type="term" value="C:pilus"/>
    <property type="evidence" value="ECO:0007669"/>
    <property type="project" value="UniProtKB-SubCell"/>
</dbReference>
<dbReference type="GO" id="GO:0007155">
    <property type="term" value="P:cell adhesion"/>
    <property type="evidence" value="ECO:0007669"/>
    <property type="project" value="UniProtKB-KW"/>
</dbReference>
<dbReference type="InterPro" id="IPR005528">
    <property type="entry name" value="ChpA-H"/>
</dbReference>
<dbReference type="Pfam" id="PF03777">
    <property type="entry name" value="ChpA-C"/>
    <property type="match status" value="1"/>
</dbReference>
<dbReference type="PROSITE" id="PS51884">
    <property type="entry name" value="CHAPLIN"/>
    <property type="match status" value="1"/>
</dbReference>
<protein>
    <recommendedName>
        <fullName evidence="11">Chaplin-F</fullName>
    </recommendedName>
    <alternativeName>
        <fullName evidence="12">Chaplin-G</fullName>
    </alternativeName>
</protein>
<reference key="1">
    <citation type="journal article" date="2002" name="Nature">
        <title>Complete genome sequence of the model actinomycete Streptomyces coelicolor A3(2).</title>
        <authorList>
            <person name="Bentley S.D."/>
            <person name="Chater K.F."/>
            <person name="Cerdeno-Tarraga A.-M."/>
            <person name="Challis G.L."/>
            <person name="Thomson N.R."/>
            <person name="James K.D."/>
            <person name="Harris D.E."/>
            <person name="Quail M.A."/>
            <person name="Kieser H."/>
            <person name="Harper D."/>
            <person name="Bateman A."/>
            <person name="Brown S."/>
            <person name="Chandra G."/>
            <person name="Chen C.W."/>
            <person name="Collins M."/>
            <person name="Cronin A."/>
            <person name="Fraser A."/>
            <person name="Goble A."/>
            <person name="Hidalgo J."/>
            <person name="Hornsby T."/>
            <person name="Howarth S."/>
            <person name="Huang C.-H."/>
            <person name="Kieser T."/>
            <person name="Larke L."/>
            <person name="Murphy L.D."/>
            <person name="Oliver K."/>
            <person name="O'Neil S."/>
            <person name="Rabbinowitsch E."/>
            <person name="Rajandream M.A."/>
            <person name="Rutherford K.M."/>
            <person name="Rutter S."/>
            <person name="Seeger K."/>
            <person name="Saunders D."/>
            <person name="Sharp S."/>
            <person name="Squares R."/>
            <person name="Squares S."/>
            <person name="Taylor K."/>
            <person name="Warren T."/>
            <person name="Wietzorrek A."/>
            <person name="Woodward J.R."/>
            <person name="Barrell B.G."/>
            <person name="Parkhill J."/>
            <person name="Hopwood D.A."/>
        </authorList>
    </citation>
    <scope>NUCLEOTIDE SEQUENCE [LARGE SCALE GENOMIC DNA]</scope>
    <source>
        <strain>ATCC BAA-471 / A3(2) / M145</strain>
    </source>
</reference>
<reference key="2">
    <citation type="journal article" date="2003" name="Genes Dev.">
        <title>A novel class of secreted hydrophobic proteins is involved in aerial hyphae formation in Streptomyces coelicolor by forming amyloid-like fibrils.</title>
        <authorList>
            <person name="Claessen D."/>
            <person name="Rink R."/>
            <person name="de Jong W."/>
            <person name="Siebring J."/>
            <person name="de Vreugd P."/>
            <person name="Boersma F.G."/>
            <person name="Dijkhuizen L."/>
            <person name="Wosten H.A."/>
        </authorList>
    </citation>
    <scope>FUNCTION</scope>
    <scope>AMYLOID FORMATION</scope>
    <scope>SUBCELLULAR LOCATION</scope>
    <scope>DEVELOPMENTAL STAGE</scope>
    <scope>INDUCTION</scope>
    <scope>MASS SPECTROMETRY</scope>
    <source>
        <strain>ATCC BAA-471 / A3(2) / M145</strain>
    </source>
</reference>
<reference key="3">
    <citation type="journal article" date="2003" name="Genes Dev.">
        <title>The chaplins: a family of hydrophobic cell-surface proteins involved in aerial mycelium formation in Streptomyces coelicolor.</title>
        <authorList>
            <person name="Elliot M.A."/>
            <person name="Karoonuthaisiri N."/>
            <person name="Huang J."/>
            <person name="Bibb M.J."/>
            <person name="Cohen S.N."/>
            <person name="Kao C.M."/>
            <person name="Buttner M.J."/>
        </authorList>
    </citation>
    <scope>FUNCTION</scope>
    <scope>SUBCELLULAR LOCATION</scope>
    <scope>INDUCTION</scope>
    <scope>MASS SPECTROMETRY</scope>
    <source>
        <strain>A3(2) / M600</strain>
    </source>
</reference>
<reference key="4">
    <citation type="journal article" date="2004" name="Mol. Microbiol.">
        <title>The formation of the rodlet layer of streptomycetes is the result of the interplay between rodlins and chaplins.</title>
        <authorList>
            <person name="Claessen D."/>
            <person name="Stokroos I."/>
            <person name="Deelstra H.J."/>
            <person name="Penninga N.A."/>
            <person name="Bormann C."/>
            <person name="Salas J.A."/>
            <person name="Dijkhuizen L."/>
            <person name="Woesten H.A."/>
        </authorList>
    </citation>
    <scope>FUNCTION</scope>
    <scope>DISRUPTION PHENOTYPE</scope>
    <source>
        <strain>ATCC BAA-471 / A3(2) / M145</strain>
    </source>
</reference>
<reference key="5">
    <citation type="journal article" date="2007" name="Mol. Microbiol.">
        <title>SapB and the chaplins: connections between morphogenetic proteins in Streptomyces coelicolor.</title>
        <authorList>
            <person name="Capstick D.S."/>
            <person name="Willey J.M."/>
            <person name="Buttner M.J."/>
            <person name="Elliot M.A."/>
        </authorList>
    </citation>
    <scope>FUNCTION</scope>
    <scope>SUBCELLULAR LOCATION</scope>
    <scope>DEVELOPMENTAL STAGE</scope>
    <scope>INDUCTION</scope>
    <scope>DISRUPTION PHENOTYPE</scope>
    <source>
        <strain>A3(2) / M600</strain>
    </source>
</reference>
<reference key="6">
    <citation type="journal article" date="2009" name="Mol. Microbiol.">
        <title>Attachment of Streptomyces coelicolor is mediated by amyloidal fimbriae that are anchored to the cell surface via cellulose.</title>
        <authorList>
            <person name="de Jong W."/>
            <person name="Woesten H.A."/>
            <person name="Dijkhuizen L."/>
            <person name="Claessen D."/>
        </authorList>
    </citation>
    <scope>FUNCTION IN GROWTH SUBSTRATE ATTACHMENT</scope>
    <scope>SUBCELLULAR LOCATION</scope>
    <scope>DISRUPTION PHENOTYPE</scope>
    <source>
        <strain>ATCC BAA-471 / A3(2) / M145</strain>
    </source>
</reference>
<reference key="7">
    <citation type="journal article" date="2011" name="PLoS ONE">
        <title>The assembly of individual chaplin peptides from Streptomyces coelicolor into functional amyloid fibrils.</title>
        <authorList>
            <person name="Sawyer E.B."/>
            <person name="Claessen D."/>
            <person name="Haas M."/>
            <person name="Hurgobin B."/>
            <person name="Gras S.L."/>
        </authorList>
    </citation>
    <scope>FUNCTION</scope>
    <scope>AMYLOID FORMATION</scope>
    <scope>SUBUNIT</scope>
    <scope>SUBCELLULAR LOCATION</scope>
    <scope>DISULFIDE BOND</scope>
</reference>
<reference key="8">
    <citation type="journal article" date="2013" name="J. Struct. Biol.">
        <title>Chaplins of Streptomyces coelicolor self-assemble into two distinct functional amyloids.</title>
        <authorList>
            <person name="Bokhove M."/>
            <person name="Claessen D."/>
            <person name="de Jong W."/>
            <person name="Dijkhuizen L."/>
            <person name="Boekema E.J."/>
            <person name="Oostergetel G.T."/>
        </authorList>
    </citation>
    <scope>FUNCTION</scope>
    <scope>AMYLOID FORMATION</scope>
</reference>
<reference key="9">
    <citation type="journal article" date="2014" name="Appl. Microbiol. Biotechnol.">
        <title>Surface modification using interfacial assembly of the Streptomyces chaplin proteins.</title>
        <authorList>
            <person name="Ekkers D.M."/>
            <person name="Claessen D."/>
            <person name="Galli F."/>
            <person name="Stamhuis E."/>
        </authorList>
    </citation>
    <scope>BIOTECHNOLOGY</scope>
    <source>
        <strain>ATCC BAA-471 / A3(2) / M145</strain>
    </source>
</reference>
<reference key="10">
    <citation type="journal article" date="2017" name="Biomolecules">
        <title>Structure-dependent interfacial properties of chaplin F from Streptomyces coelicolor.</title>
        <authorList>
            <person name="Dokouhaki M."/>
            <person name="Prime E.L."/>
            <person name="Hung A."/>
            <person name="Qiao G.G."/>
            <person name="Day L."/>
            <person name="Gras S.L."/>
        </authorList>
    </citation>
    <scope>FUNCTION</scope>
    <scope>AMYLOID FORMATION</scope>
    <scope>DOMAIN</scope>
</reference>
<proteinExistence type="evidence at protein level"/>
<gene>
    <name evidence="11" type="primary">chpF</name>
    <name evidence="12" type="synonym">chpG</name>
    <name type="ordered locus">SCO2705</name>
</gene>
<feature type="signal peptide" evidence="2 3">
    <location>
        <begin position="1"/>
        <end position="36"/>
    </location>
</feature>
<feature type="chain" id="PRO_5004329169" description="Chaplin-F">
    <location>
        <begin position="37"/>
        <end position="88"/>
    </location>
</feature>
<feature type="domain" description="Chaplin" evidence="1">
    <location>
        <begin position="47"/>
        <end position="87"/>
    </location>
</feature>
<feature type="disulfide bond" evidence="13">
    <location>
        <begin position="67"/>
        <end position="85"/>
    </location>
</feature>
<keyword id="KW-0034">Amyloid</keyword>
<keyword id="KW-0130">Cell adhesion</keyword>
<keyword id="KW-0134">Cell wall</keyword>
<keyword id="KW-1015">Disulfide bond</keyword>
<keyword id="KW-0281">Fimbrium</keyword>
<keyword id="KW-1185">Reference proteome</keyword>
<keyword id="KW-0964">Secreted</keyword>
<keyword id="KW-0732">Signal</keyword>
<sequence>MYNPKEHFSMSRIAKGLALTSVAAAAVAGTAGVAAADSGAQAAAAHSPGVLSGNVVQVPVHIPVNVCGNTIDVIGLLNPAFGNECEND</sequence>
<organism>
    <name type="scientific">Streptomyces coelicolor (strain ATCC BAA-471 / A3(2) / M145)</name>
    <dbReference type="NCBI Taxonomy" id="100226"/>
    <lineage>
        <taxon>Bacteria</taxon>
        <taxon>Bacillati</taxon>
        <taxon>Actinomycetota</taxon>
        <taxon>Actinomycetes</taxon>
        <taxon>Kitasatosporales</taxon>
        <taxon>Streptomycetaceae</taxon>
        <taxon>Streptomyces</taxon>
        <taxon>Streptomyces albidoflavus group</taxon>
    </lineage>
</organism>